<gene>
    <name evidence="1" type="primary">yegS</name>
    <name type="ordered locus">EcSMS35_0975</name>
</gene>
<protein>
    <recommendedName>
        <fullName evidence="1">Probable lipid kinase YegS</fullName>
        <ecNumber evidence="1">2.7.1.-</ecNumber>
    </recommendedName>
</protein>
<reference key="1">
    <citation type="journal article" date="2008" name="J. Bacteriol.">
        <title>Insights into the environmental resistance gene pool from the genome sequence of the multidrug-resistant environmental isolate Escherichia coli SMS-3-5.</title>
        <authorList>
            <person name="Fricke W.F."/>
            <person name="Wright M.S."/>
            <person name="Lindell A.H."/>
            <person name="Harkins D.M."/>
            <person name="Baker-Austin C."/>
            <person name="Ravel J."/>
            <person name="Stepanauskas R."/>
        </authorList>
    </citation>
    <scope>NUCLEOTIDE SEQUENCE [LARGE SCALE GENOMIC DNA]</scope>
    <source>
        <strain>SMS-3-5 / SECEC</strain>
    </source>
</reference>
<proteinExistence type="inferred from homology"/>
<name>YEGS_ECOSM</name>
<dbReference type="EC" id="2.7.1.-" evidence="1"/>
<dbReference type="EMBL" id="CP000970">
    <property type="protein sequence ID" value="ACB19629.1"/>
    <property type="molecule type" value="Genomic_DNA"/>
</dbReference>
<dbReference type="RefSeq" id="WP_000807362.1">
    <property type="nucleotide sequence ID" value="NC_010498.1"/>
</dbReference>
<dbReference type="SMR" id="B1LN99"/>
<dbReference type="GeneID" id="75205975"/>
<dbReference type="KEGG" id="ecm:EcSMS35_0975"/>
<dbReference type="HOGENOM" id="CLU_045532_1_1_6"/>
<dbReference type="Proteomes" id="UP000007011">
    <property type="component" value="Chromosome"/>
</dbReference>
<dbReference type="GO" id="GO:0005737">
    <property type="term" value="C:cytoplasm"/>
    <property type="evidence" value="ECO:0007669"/>
    <property type="project" value="UniProtKB-SubCell"/>
</dbReference>
<dbReference type="GO" id="GO:0005886">
    <property type="term" value="C:plasma membrane"/>
    <property type="evidence" value="ECO:0007669"/>
    <property type="project" value="TreeGrafter"/>
</dbReference>
<dbReference type="GO" id="GO:0005524">
    <property type="term" value="F:ATP binding"/>
    <property type="evidence" value="ECO:0007669"/>
    <property type="project" value="UniProtKB-UniRule"/>
</dbReference>
<dbReference type="GO" id="GO:0001727">
    <property type="term" value="F:lipid kinase activity"/>
    <property type="evidence" value="ECO:0007669"/>
    <property type="project" value="UniProtKB-UniRule"/>
</dbReference>
<dbReference type="GO" id="GO:0000287">
    <property type="term" value="F:magnesium ion binding"/>
    <property type="evidence" value="ECO:0007669"/>
    <property type="project" value="UniProtKB-UniRule"/>
</dbReference>
<dbReference type="GO" id="GO:0008654">
    <property type="term" value="P:phospholipid biosynthetic process"/>
    <property type="evidence" value="ECO:0007669"/>
    <property type="project" value="UniProtKB-UniRule"/>
</dbReference>
<dbReference type="FunFam" id="2.60.200.40:FF:000008">
    <property type="entry name" value="Probable lipid kinase YegS"/>
    <property type="match status" value="1"/>
</dbReference>
<dbReference type="FunFam" id="3.40.50.10330:FF:000008">
    <property type="entry name" value="Probable lipid kinase YegS"/>
    <property type="match status" value="1"/>
</dbReference>
<dbReference type="Gene3D" id="2.60.200.40">
    <property type="match status" value="1"/>
</dbReference>
<dbReference type="Gene3D" id="3.40.50.10330">
    <property type="entry name" value="Probable inorganic polyphosphate/atp-NAD kinase, domain 1"/>
    <property type="match status" value="1"/>
</dbReference>
<dbReference type="HAMAP" id="MF_01377">
    <property type="entry name" value="YegS"/>
    <property type="match status" value="1"/>
</dbReference>
<dbReference type="InterPro" id="IPR017438">
    <property type="entry name" value="ATP-NAD_kinase_N"/>
</dbReference>
<dbReference type="InterPro" id="IPR005218">
    <property type="entry name" value="Diacylglycerol/lipid_kinase"/>
</dbReference>
<dbReference type="InterPro" id="IPR001206">
    <property type="entry name" value="Diacylglycerol_kinase_cat_dom"/>
</dbReference>
<dbReference type="InterPro" id="IPR022433">
    <property type="entry name" value="Lip_kinase_YegS"/>
</dbReference>
<dbReference type="InterPro" id="IPR050187">
    <property type="entry name" value="Lipid_Phosphate_FormReg"/>
</dbReference>
<dbReference type="InterPro" id="IPR016064">
    <property type="entry name" value="NAD/diacylglycerol_kinase_sf"/>
</dbReference>
<dbReference type="InterPro" id="IPR045540">
    <property type="entry name" value="YegS/DAGK_C"/>
</dbReference>
<dbReference type="NCBIfam" id="TIGR03702">
    <property type="entry name" value="lip_kinase_YegS"/>
    <property type="match status" value="1"/>
</dbReference>
<dbReference type="NCBIfam" id="NF009602">
    <property type="entry name" value="PRK13054.1"/>
    <property type="match status" value="1"/>
</dbReference>
<dbReference type="NCBIfam" id="TIGR00147">
    <property type="entry name" value="YegS/Rv2252/BmrU family lipid kinase"/>
    <property type="match status" value="1"/>
</dbReference>
<dbReference type="PANTHER" id="PTHR12358:SF106">
    <property type="entry name" value="LIPID KINASE YEGS"/>
    <property type="match status" value="1"/>
</dbReference>
<dbReference type="PANTHER" id="PTHR12358">
    <property type="entry name" value="SPHINGOSINE KINASE"/>
    <property type="match status" value="1"/>
</dbReference>
<dbReference type="Pfam" id="PF00781">
    <property type="entry name" value="DAGK_cat"/>
    <property type="match status" value="1"/>
</dbReference>
<dbReference type="Pfam" id="PF19279">
    <property type="entry name" value="YegS_C"/>
    <property type="match status" value="1"/>
</dbReference>
<dbReference type="SMART" id="SM00046">
    <property type="entry name" value="DAGKc"/>
    <property type="match status" value="1"/>
</dbReference>
<dbReference type="SUPFAM" id="SSF111331">
    <property type="entry name" value="NAD kinase/diacylglycerol kinase-like"/>
    <property type="match status" value="1"/>
</dbReference>
<dbReference type="PROSITE" id="PS50146">
    <property type="entry name" value="DAGK"/>
    <property type="match status" value="1"/>
</dbReference>
<evidence type="ECO:0000255" key="1">
    <source>
        <dbReference type="HAMAP-Rule" id="MF_01377"/>
    </source>
</evidence>
<accession>B1LN99</accession>
<comment type="function">
    <text evidence="1">Probably phosphorylates lipids; the in vivo substrate is unknown.</text>
</comment>
<comment type="cofactor">
    <cofactor evidence="1">
        <name>Mg(2+)</name>
        <dbReference type="ChEBI" id="CHEBI:18420"/>
    </cofactor>
    <cofactor evidence="1">
        <name>Ca(2+)</name>
        <dbReference type="ChEBI" id="CHEBI:29108"/>
    </cofactor>
    <text evidence="1">Binds 1 Mg(2+) ion per subunit. Ca(2+) may be able to substitute.</text>
</comment>
<comment type="subcellular location">
    <subcellularLocation>
        <location evidence="1">Cytoplasm</location>
    </subcellularLocation>
</comment>
<comment type="similarity">
    <text evidence="1">Belongs to the diacylglycerol/lipid kinase family. YegS lipid kinase subfamily.</text>
</comment>
<feature type="chain" id="PRO_1000144869" description="Probable lipid kinase YegS">
    <location>
        <begin position="1"/>
        <end position="299"/>
    </location>
</feature>
<feature type="domain" description="DAGKc" evidence="1">
    <location>
        <begin position="2"/>
        <end position="133"/>
    </location>
</feature>
<feature type="active site" description="Proton acceptor" evidence="1">
    <location>
        <position position="271"/>
    </location>
</feature>
<feature type="binding site" evidence="1">
    <location>
        <position position="40"/>
    </location>
    <ligand>
        <name>ATP</name>
        <dbReference type="ChEBI" id="CHEBI:30616"/>
    </ligand>
</feature>
<feature type="binding site" evidence="1">
    <location>
        <begin position="66"/>
        <end position="72"/>
    </location>
    <ligand>
        <name>ATP</name>
        <dbReference type="ChEBI" id="CHEBI:30616"/>
    </ligand>
</feature>
<feature type="binding site" evidence="1">
    <location>
        <position position="95"/>
    </location>
    <ligand>
        <name>ATP</name>
        <dbReference type="ChEBI" id="CHEBI:30616"/>
    </ligand>
</feature>
<feature type="binding site" evidence="1">
    <location>
        <position position="215"/>
    </location>
    <ligand>
        <name>Mg(2+)</name>
        <dbReference type="ChEBI" id="CHEBI:18420"/>
    </ligand>
</feature>
<feature type="binding site" evidence="1">
    <location>
        <position position="218"/>
    </location>
    <ligand>
        <name>Mg(2+)</name>
        <dbReference type="ChEBI" id="CHEBI:18420"/>
    </ligand>
</feature>
<feature type="binding site" evidence="1">
    <location>
        <position position="220"/>
    </location>
    <ligand>
        <name>Mg(2+)</name>
        <dbReference type="ChEBI" id="CHEBI:18420"/>
    </ligand>
</feature>
<organism>
    <name type="scientific">Escherichia coli (strain SMS-3-5 / SECEC)</name>
    <dbReference type="NCBI Taxonomy" id="439855"/>
    <lineage>
        <taxon>Bacteria</taxon>
        <taxon>Pseudomonadati</taxon>
        <taxon>Pseudomonadota</taxon>
        <taxon>Gammaproteobacteria</taxon>
        <taxon>Enterobacterales</taxon>
        <taxon>Enterobacteriaceae</taxon>
        <taxon>Escherichia</taxon>
    </lineage>
</organism>
<keyword id="KW-0067">ATP-binding</keyword>
<keyword id="KW-0963">Cytoplasm</keyword>
<keyword id="KW-0418">Kinase</keyword>
<keyword id="KW-0444">Lipid biosynthesis</keyword>
<keyword id="KW-0443">Lipid metabolism</keyword>
<keyword id="KW-0460">Magnesium</keyword>
<keyword id="KW-0479">Metal-binding</keyword>
<keyword id="KW-0547">Nucleotide-binding</keyword>
<keyword id="KW-0594">Phospholipid biosynthesis</keyword>
<keyword id="KW-1208">Phospholipid metabolism</keyword>
<keyword id="KW-0808">Transferase</keyword>
<sequence>MAEFPASLLILNGKSTDNLPLREAIMLLREEGMTIHVRVTWEKGDAARYVEEARKLGVATVIAGGGDGTINEVSTALIQCEGDDIPALGILPLGTANDFATSVGIPEALDKALKLAIAGNAIAIDMAQVNKQTCFINMATGGFGTRITTETPEKLKAALGGVSYIIHGLMRMDTLQPDRCEIRGENFHWQGDALVIGIGNGRQAGGGQQLCPNALINDGLLQLRIFTGDEILPALVSTLKSDEDNPNIIEGASSWFDIQAPHEITFNLDGEPLSGQNFHIEILPAALRCRLPPDCPLLR</sequence>